<organism>
    <name type="scientific">Arabidopsis thaliana</name>
    <name type="common">Mouse-ear cress</name>
    <dbReference type="NCBI Taxonomy" id="3702"/>
    <lineage>
        <taxon>Eukaryota</taxon>
        <taxon>Viridiplantae</taxon>
        <taxon>Streptophyta</taxon>
        <taxon>Embryophyta</taxon>
        <taxon>Tracheophyta</taxon>
        <taxon>Spermatophyta</taxon>
        <taxon>Magnoliopsida</taxon>
        <taxon>eudicotyledons</taxon>
        <taxon>Gunneridae</taxon>
        <taxon>Pentapetalae</taxon>
        <taxon>rosids</taxon>
        <taxon>malvids</taxon>
        <taxon>Brassicales</taxon>
        <taxon>Brassicaceae</taxon>
        <taxon>Camelineae</taxon>
        <taxon>Arabidopsis</taxon>
    </lineage>
</organism>
<sequence length="151" mass="17513">MATSGTYVTEVPLKGSAEKHYKRWRSENHLFPDAIGHHIQGVTIHDGEWDSHGAIKIWNYTCDGKPEVFKERREIDDENMAVTFRGLEGHVMEQLKVYDVIFQFIQKSPDDIICKITMIWEKQNDDMPEPSNYMKFVKSLAADMDDHVLKA</sequence>
<reference key="1">
    <citation type="submission" date="2001-01" db="EMBL/GenBank/DDBJ databases">
        <title>Molecular and phylogenetic analysis of a gene family in Arabidopsis thaliana with similarities to major latex, pathogenesis-related and ripening-induced proteins.</title>
        <authorList>
            <person name="Muller S."/>
            <person name="Klimt S."/>
            <person name="Hauser M.T."/>
        </authorList>
    </citation>
    <scope>NUCLEOTIDE SEQUENCE [GENOMIC DNA]</scope>
    <source>
        <strain>cv. Columbia</strain>
    </source>
</reference>
<reference key="2">
    <citation type="journal article" date="1999" name="Nature">
        <title>Sequence and analysis of chromosome 2 of the plant Arabidopsis thaliana.</title>
        <authorList>
            <person name="Lin X."/>
            <person name="Kaul S."/>
            <person name="Rounsley S.D."/>
            <person name="Shea T.P."/>
            <person name="Benito M.-I."/>
            <person name="Town C.D."/>
            <person name="Fujii C.Y."/>
            <person name="Mason T.M."/>
            <person name="Bowman C.L."/>
            <person name="Barnstead M.E."/>
            <person name="Feldblyum T.V."/>
            <person name="Buell C.R."/>
            <person name="Ketchum K.A."/>
            <person name="Lee J.J."/>
            <person name="Ronning C.M."/>
            <person name="Koo H.L."/>
            <person name="Moffat K.S."/>
            <person name="Cronin L.A."/>
            <person name="Shen M."/>
            <person name="Pai G."/>
            <person name="Van Aken S."/>
            <person name="Umayam L."/>
            <person name="Tallon L.J."/>
            <person name="Gill J.E."/>
            <person name="Adams M.D."/>
            <person name="Carrera A.J."/>
            <person name="Creasy T.H."/>
            <person name="Goodman H.M."/>
            <person name="Somerville C.R."/>
            <person name="Copenhaver G.P."/>
            <person name="Preuss D."/>
            <person name="Nierman W.C."/>
            <person name="White O."/>
            <person name="Eisen J.A."/>
            <person name="Salzberg S.L."/>
            <person name="Fraser C.M."/>
            <person name="Venter J.C."/>
        </authorList>
    </citation>
    <scope>NUCLEOTIDE SEQUENCE [LARGE SCALE GENOMIC DNA]</scope>
    <source>
        <strain>cv. Columbia</strain>
    </source>
</reference>
<reference key="3">
    <citation type="journal article" date="2017" name="Plant J.">
        <title>Araport11: a complete reannotation of the Arabidopsis thaliana reference genome.</title>
        <authorList>
            <person name="Cheng C.Y."/>
            <person name="Krishnakumar V."/>
            <person name="Chan A.P."/>
            <person name="Thibaud-Nissen F."/>
            <person name="Schobel S."/>
            <person name="Town C.D."/>
        </authorList>
    </citation>
    <scope>GENOME REANNOTATION</scope>
    <source>
        <strain>cv. Columbia</strain>
    </source>
</reference>
<reference key="4">
    <citation type="journal article" date="2003" name="Science">
        <title>Empirical analysis of transcriptional activity in the Arabidopsis genome.</title>
        <authorList>
            <person name="Yamada K."/>
            <person name="Lim J."/>
            <person name="Dale J.M."/>
            <person name="Chen H."/>
            <person name="Shinn P."/>
            <person name="Palm C.J."/>
            <person name="Southwick A.M."/>
            <person name="Wu H.C."/>
            <person name="Kim C.J."/>
            <person name="Nguyen M."/>
            <person name="Pham P.K."/>
            <person name="Cheuk R.F."/>
            <person name="Karlin-Newmann G."/>
            <person name="Liu S.X."/>
            <person name="Lam B."/>
            <person name="Sakano H."/>
            <person name="Wu T."/>
            <person name="Yu G."/>
            <person name="Miranda M."/>
            <person name="Quach H.L."/>
            <person name="Tripp M."/>
            <person name="Chang C.H."/>
            <person name="Lee J.M."/>
            <person name="Toriumi M.J."/>
            <person name="Chan M.M."/>
            <person name="Tang C.C."/>
            <person name="Onodera C.S."/>
            <person name="Deng J.M."/>
            <person name="Akiyama K."/>
            <person name="Ansari Y."/>
            <person name="Arakawa T."/>
            <person name="Banh J."/>
            <person name="Banno F."/>
            <person name="Bowser L."/>
            <person name="Brooks S.Y."/>
            <person name="Carninci P."/>
            <person name="Chao Q."/>
            <person name="Choy N."/>
            <person name="Enju A."/>
            <person name="Goldsmith A.D."/>
            <person name="Gurjal M."/>
            <person name="Hansen N.F."/>
            <person name="Hayashizaki Y."/>
            <person name="Johnson-Hopson C."/>
            <person name="Hsuan V.W."/>
            <person name="Iida K."/>
            <person name="Karnes M."/>
            <person name="Khan S."/>
            <person name="Koesema E."/>
            <person name="Ishida J."/>
            <person name="Jiang P.X."/>
            <person name="Jones T."/>
            <person name="Kawai J."/>
            <person name="Kamiya A."/>
            <person name="Meyers C."/>
            <person name="Nakajima M."/>
            <person name="Narusaka M."/>
            <person name="Seki M."/>
            <person name="Sakurai T."/>
            <person name="Satou M."/>
            <person name="Tamse R."/>
            <person name="Vaysberg M."/>
            <person name="Wallender E.K."/>
            <person name="Wong C."/>
            <person name="Yamamura Y."/>
            <person name="Yuan S."/>
            <person name="Shinozaki K."/>
            <person name="Davis R.W."/>
            <person name="Theologis A."/>
            <person name="Ecker J.R."/>
        </authorList>
    </citation>
    <scope>NUCLEOTIDE SEQUENCE [LARGE SCALE MRNA]</scope>
    <source>
        <strain>cv. Columbia</strain>
    </source>
</reference>
<reference key="5">
    <citation type="submission" date="2002-03" db="EMBL/GenBank/DDBJ databases">
        <title>Full-length cDNA from Arabidopsis thaliana.</title>
        <authorList>
            <person name="Brover V.V."/>
            <person name="Troukhan M.E."/>
            <person name="Alexandrov N.A."/>
            <person name="Lu Y.-P."/>
            <person name="Flavell R.B."/>
            <person name="Feldmann K.A."/>
        </authorList>
    </citation>
    <scope>NUCLEOTIDE SEQUENCE [LARGE SCALE MRNA]</scope>
</reference>
<protein>
    <recommendedName>
        <fullName>MLP-like protein 328</fullName>
    </recommendedName>
</protein>
<name>ML328_ARATH</name>
<proteinExistence type="evidence at transcript level"/>
<comment type="similarity">
    <text evidence="1">Belongs to the MLP family.</text>
</comment>
<accession>Q9ZVF3</accession>
<dbReference type="EMBL" id="AJ306147">
    <property type="protein sequence ID" value="CAC83595.1"/>
    <property type="molecule type" value="Genomic_DNA"/>
</dbReference>
<dbReference type="EMBL" id="AC005560">
    <property type="protein sequence ID" value="AAC67328.1"/>
    <property type="molecule type" value="Genomic_DNA"/>
</dbReference>
<dbReference type="EMBL" id="CP002685">
    <property type="protein sequence ID" value="AEC05464.1"/>
    <property type="molecule type" value="Genomic_DNA"/>
</dbReference>
<dbReference type="EMBL" id="AF458339">
    <property type="protein sequence ID" value="AAL51111.1"/>
    <property type="molecule type" value="mRNA"/>
</dbReference>
<dbReference type="EMBL" id="AY054247">
    <property type="protein sequence ID" value="AAL06906.1"/>
    <property type="molecule type" value="mRNA"/>
</dbReference>
<dbReference type="EMBL" id="AY085745">
    <property type="protein sequence ID" value="AAM62963.1"/>
    <property type="molecule type" value="mRNA"/>
</dbReference>
<dbReference type="PIR" id="G84425">
    <property type="entry name" value="G84425"/>
</dbReference>
<dbReference type="RefSeq" id="NP_565264.1">
    <property type="nucleotide sequence ID" value="NM_126213.3"/>
</dbReference>
<dbReference type="SMR" id="Q9ZVF3"/>
<dbReference type="BioGRID" id="84">
    <property type="interactions" value="4"/>
</dbReference>
<dbReference type="FunCoup" id="Q9ZVF3">
    <property type="interactions" value="98"/>
</dbReference>
<dbReference type="IntAct" id="Q9ZVF3">
    <property type="interactions" value="1"/>
</dbReference>
<dbReference type="STRING" id="3702.Q9ZVF3"/>
<dbReference type="iPTMnet" id="Q9ZVF3"/>
<dbReference type="PaxDb" id="3702-AT2G01520.1"/>
<dbReference type="ProteomicsDB" id="238340"/>
<dbReference type="EnsemblPlants" id="AT2G01520.1">
    <property type="protein sequence ID" value="AT2G01520.1"/>
    <property type="gene ID" value="AT2G01520"/>
</dbReference>
<dbReference type="GeneID" id="814681"/>
<dbReference type="Gramene" id="AT2G01520.1">
    <property type="protein sequence ID" value="AT2G01520.1"/>
    <property type="gene ID" value="AT2G01520"/>
</dbReference>
<dbReference type="KEGG" id="ath:AT2G01520"/>
<dbReference type="Araport" id="AT2G01520"/>
<dbReference type="TAIR" id="AT2G01520">
    <property type="gene designation" value="MLP328"/>
</dbReference>
<dbReference type="eggNOG" id="ENOG502S36X">
    <property type="taxonomic scope" value="Eukaryota"/>
</dbReference>
<dbReference type="HOGENOM" id="CLU_081988_7_0_1"/>
<dbReference type="InParanoid" id="Q9ZVF3"/>
<dbReference type="OMA" id="EVHEGEW"/>
<dbReference type="OrthoDB" id="1072116at2759"/>
<dbReference type="PhylomeDB" id="Q9ZVF3"/>
<dbReference type="PRO" id="PR:Q9ZVF3"/>
<dbReference type="Proteomes" id="UP000006548">
    <property type="component" value="Chromosome 2"/>
</dbReference>
<dbReference type="ExpressionAtlas" id="Q9ZVF3">
    <property type="expression patterns" value="baseline and differential"/>
</dbReference>
<dbReference type="GO" id="GO:0005829">
    <property type="term" value="C:cytosol"/>
    <property type="evidence" value="ECO:0000314"/>
    <property type="project" value="TAIR"/>
</dbReference>
<dbReference type="GO" id="GO:0005739">
    <property type="term" value="C:mitochondrion"/>
    <property type="evidence" value="ECO:0007005"/>
    <property type="project" value="TAIR"/>
</dbReference>
<dbReference type="GO" id="GO:0005507">
    <property type="term" value="F:copper ion binding"/>
    <property type="evidence" value="ECO:0007005"/>
    <property type="project" value="TAIR"/>
</dbReference>
<dbReference type="GO" id="GO:0006952">
    <property type="term" value="P:defense response"/>
    <property type="evidence" value="ECO:0007669"/>
    <property type="project" value="InterPro"/>
</dbReference>
<dbReference type="GO" id="GO:0080184">
    <property type="term" value="P:response to phenylpropanoid"/>
    <property type="evidence" value="ECO:0000270"/>
    <property type="project" value="TAIR"/>
</dbReference>
<dbReference type="GO" id="GO:0010043">
    <property type="term" value="P:response to zinc ion"/>
    <property type="evidence" value="ECO:0000270"/>
    <property type="project" value="TAIR"/>
</dbReference>
<dbReference type="GO" id="GO:0010228">
    <property type="term" value="P:vegetative to reproductive phase transition of meristem"/>
    <property type="evidence" value="ECO:0000315"/>
    <property type="project" value="TAIR"/>
</dbReference>
<dbReference type="CDD" id="cd07816">
    <property type="entry name" value="Bet_v1-like"/>
    <property type="match status" value="1"/>
</dbReference>
<dbReference type="FunFam" id="3.30.530.20:FF:000040">
    <property type="entry name" value="MLP-like protein 329"/>
    <property type="match status" value="1"/>
</dbReference>
<dbReference type="Gene3D" id="3.30.530.20">
    <property type="match status" value="1"/>
</dbReference>
<dbReference type="InterPro" id="IPR000916">
    <property type="entry name" value="Bet_v_I/MLP"/>
</dbReference>
<dbReference type="InterPro" id="IPR052006">
    <property type="entry name" value="MLP-like"/>
</dbReference>
<dbReference type="InterPro" id="IPR023393">
    <property type="entry name" value="START-like_dom_sf"/>
</dbReference>
<dbReference type="PANTHER" id="PTHR31338:SF18">
    <property type="entry name" value="MLP-LIKE PROTEIN 328-RELATED"/>
    <property type="match status" value="1"/>
</dbReference>
<dbReference type="PANTHER" id="PTHR31338">
    <property type="entry name" value="POLYKETIDE CYCLASE/DEHYDRASE AND LIPID TRANSPORT SUPERFAMILY PROTEIN"/>
    <property type="match status" value="1"/>
</dbReference>
<dbReference type="Pfam" id="PF00407">
    <property type="entry name" value="Bet_v_1"/>
    <property type="match status" value="1"/>
</dbReference>
<dbReference type="SMART" id="SM01037">
    <property type="entry name" value="Bet_v_1"/>
    <property type="match status" value="1"/>
</dbReference>
<dbReference type="SUPFAM" id="SSF55961">
    <property type="entry name" value="Bet v1-like"/>
    <property type="match status" value="1"/>
</dbReference>
<gene>
    <name type="primary">MLP328</name>
    <name type="ordered locus">At2g01520</name>
    <name type="ORF">F2I9.14</name>
</gene>
<evidence type="ECO:0000305" key="1"/>
<keyword id="KW-1185">Reference proteome</keyword>
<feature type="chain" id="PRO_0000210074" description="MLP-like protein 328">
    <location>
        <begin position="1"/>
        <end position="151"/>
    </location>
</feature>